<comment type="function">
    <text evidence="1">Catalyzes the reversible isomerization-deamination of glucosamine 6-phosphate (GlcN6P) to form fructose 6-phosphate (Fru6P) and ammonium ion.</text>
</comment>
<comment type="catalytic activity">
    <reaction evidence="1">
        <text>alpha-D-glucosamine 6-phosphate + H2O = beta-D-fructose 6-phosphate + NH4(+)</text>
        <dbReference type="Rhea" id="RHEA:12172"/>
        <dbReference type="ChEBI" id="CHEBI:15377"/>
        <dbReference type="ChEBI" id="CHEBI:28938"/>
        <dbReference type="ChEBI" id="CHEBI:57634"/>
        <dbReference type="ChEBI" id="CHEBI:75989"/>
        <dbReference type="EC" id="3.5.99.6"/>
    </reaction>
</comment>
<comment type="activity regulation">
    <text evidence="1">Allosterically activated by N-acetylglucosamine 6-phosphate (GlcNAc6P).</text>
</comment>
<comment type="pathway">
    <text evidence="1">Amino-sugar metabolism; N-acetylneuraminate degradation; D-fructose 6-phosphate from N-acetylneuraminate: step 5/5.</text>
</comment>
<comment type="similarity">
    <text evidence="1">Belongs to the glucosamine/galactosamine-6-phosphate isomerase family. NagB subfamily.</text>
</comment>
<protein>
    <recommendedName>
        <fullName evidence="1">Glucosamine-6-phosphate deaminase</fullName>
        <ecNumber evidence="1">3.5.99.6</ecNumber>
    </recommendedName>
    <alternativeName>
        <fullName evidence="1">GlcN6P deaminase</fullName>
        <shortName evidence="1">GNPDA</shortName>
    </alternativeName>
    <alternativeName>
        <fullName evidence="1">Glucosamine-6-phosphate isomerase</fullName>
    </alternativeName>
</protein>
<evidence type="ECO:0000255" key="1">
    <source>
        <dbReference type="HAMAP-Rule" id="MF_01241"/>
    </source>
</evidence>
<accession>Q7MW43</accession>
<keyword id="KW-0021">Allosteric enzyme</keyword>
<keyword id="KW-0119">Carbohydrate metabolism</keyword>
<keyword id="KW-0378">Hydrolase</keyword>
<keyword id="KW-1185">Reference proteome</keyword>
<feature type="chain" id="PRO_1000067009" description="Glucosamine-6-phosphate deaminase">
    <location>
        <begin position="1"/>
        <end position="263"/>
    </location>
</feature>
<feature type="active site" description="Proton acceptor; for enolization step" evidence="1">
    <location>
        <position position="72"/>
    </location>
</feature>
<feature type="active site" description="For ring-opening step" evidence="1">
    <location>
        <position position="141"/>
    </location>
</feature>
<feature type="active site" description="Proton acceptor; for ring-opening step" evidence="1">
    <location>
        <position position="143"/>
    </location>
</feature>
<feature type="active site" description="For ring-opening step" evidence="1">
    <location>
        <position position="148"/>
    </location>
</feature>
<feature type="site" description="Part of the allosteric site" evidence="1">
    <location>
        <position position="151"/>
    </location>
</feature>
<feature type="site" description="Part of the allosteric site" evidence="1">
    <location>
        <position position="158"/>
    </location>
</feature>
<feature type="site" description="Part of the allosteric site" evidence="1">
    <location>
        <position position="160"/>
    </location>
</feature>
<feature type="site" description="Part of the allosteric site" evidence="1">
    <location>
        <position position="161"/>
    </location>
</feature>
<feature type="site" description="Part of the allosteric site" evidence="1">
    <location>
        <position position="254"/>
    </location>
</feature>
<reference key="1">
    <citation type="journal article" date="2003" name="J. Bacteriol.">
        <title>Complete genome sequence of the oral pathogenic bacterium Porphyromonas gingivalis strain W83.</title>
        <authorList>
            <person name="Nelson K.E."/>
            <person name="Fleischmann R.D."/>
            <person name="DeBoy R.T."/>
            <person name="Paulsen I.T."/>
            <person name="Fouts D.E."/>
            <person name="Eisen J.A."/>
            <person name="Daugherty S.C."/>
            <person name="Dodson R.J."/>
            <person name="Durkin A.S."/>
            <person name="Gwinn M.L."/>
            <person name="Haft D.H."/>
            <person name="Kolonay J.F."/>
            <person name="Nelson W.C."/>
            <person name="Mason T.M."/>
            <person name="Tallon L."/>
            <person name="Gray J."/>
            <person name="Granger D."/>
            <person name="Tettelin H."/>
            <person name="Dong H."/>
            <person name="Galvin J.L."/>
            <person name="Duncan M.J."/>
            <person name="Dewhirst F.E."/>
            <person name="Fraser C.M."/>
        </authorList>
    </citation>
    <scope>NUCLEOTIDE SEQUENCE [LARGE SCALE GENOMIC DNA]</scope>
    <source>
        <strain>ATCC BAA-308 / W83</strain>
    </source>
</reference>
<organism>
    <name type="scientific">Porphyromonas gingivalis (strain ATCC BAA-308 / W83)</name>
    <dbReference type="NCBI Taxonomy" id="242619"/>
    <lineage>
        <taxon>Bacteria</taxon>
        <taxon>Pseudomonadati</taxon>
        <taxon>Bacteroidota</taxon>
        <taxon>Bacteroidia</taxon>
        <taxon>Bacteroidales</taxon>
        <taxon>Porphyromonadaceae</taxon>
        <taxon>Porphyromonas</taxon>
    </lineage>
</organism>
<proteinExistence type="inferred from homology"/>
<name>NAGB_PORGI</name>
<sequence length="263" mass="29281">MRLIIEPDYDKLSKWAADYVIERIHKAAPTAEKPFVLGLPTGSSPIGMYRELVKACKEGCISFRHVITFNMDEYVGLAIEHPESYHSFMHRHLFDHIDILPQNIHILNGNAPDLTAECDAYERAIEAAGGIDLFIGGIGPDGHIAFNEPGSSLTSRTRIKTLTTDTVLANSRFFDNDTNQVPKRALTVGVGTIMDAREVMILVNGHTKARALREAVEGAVSQMWTITALQLHRQSIIVCDEAACVELKVGTYNYFKDIERNNL</sequence>
<gene>
    <name evidence="1" type="primary">nagB</name>
    <name type="ordered locus">PG_0803</name>
</gene>
<dbReference type="EC" id="3.5.99.6" evidence="1"/>
<dbReference type="EMBL" id="AE015924">
    <property type="protein sequence ID" value="AAQ65963.1"/>
    <property type="molecule type" value="Genomic_DNA"/>
</dbReference>
<dbReference type="RefSeq" id="WP_004585340.1">
    <property type="nucleotide sequence ID" value="NC_002950.2"/>
</dbReference>
<dbReference type="SMR" id="Q7MW43"/>
<dbReference type="STRING" id="242619.PG_0803"/>
<dbReference type="EnsemblBacteria" id="AAQ65963">
    <property type="protein sequence ID" value="AAQ65963"/>
    <property type="gene ID" value="PG_0803"/>
</dbReference>
<dbReference type="KEGG" id="pgi:PG_0803"/>
<dbReference type="eggNOG" id="COG0363">
    <property type="taxonomic scope" value="Bacteria"/>
</dbReference>
<dbReference type="HOGENOM" id="CLU_049611_0_1_10"/>
<dbReference type="UniPathway" id="UPA00629">
    <property type="reaction ID" value="UER00684"/>
</dbReference>
<dbReference type="Proteomes" id="UP000000588">
    <property type="component" value="Chromosome"/>
</dbReference>
<dbReference type="GO" id="GO:0005737">
    <property type="term" value="C:cytoplasm"/>
    <property type="evidence" value="ECO:0007669"/>
    <property type="project" value="TreeGrafter"/>
</dbReference>
<dbReference type="GO" id="GO:0004342">
    <property type="term" value="F:glucosamine-6-phosphate deaminase activity"/>
    <property type="evidence" value="ECO:0007669"/>
    <property type="project" value="UniProtKB-UniRule"/>
</dbReference>
<dbReference type="GO" id="GO:0042802">
    <property type="term" value="F:identical protein binding"/>
    <property type="evidence" value="ECO:0007669"/>
    <property type="project" value="TreeGrafter"/>
</dbReference>
<dbReference type="GO" id="GO:0005975">
    <property type="term" value="P:carbohydrate metabolic process"/>
    <property type="evidence" value="ECO:0007669"/>
    <property type="project" value="InterPro"/>
</dbReference>
<dbReference type="GO" id="GO:0006043">
    <property type="term" value="P:glucosamine catabolic process"/>
    <property type="evidence" value="ECO:0007669"/>
    <property type="project" value="TreeGrafter"/>
</dbReference>
<dbReference type="GO" id="GO:0006046">
    <property type="term" value="P:N-acetylglucosamine catabolic process"/>
    <property type="evidence" value="ECO:0007669"/>
    <property type="project" value="TreeGrafter"/>
</dbReference>
<dbReference type="GO" id="GO:0019262">
    <property type="term" value="P:N-acetylneuraminate catabolic process"/>
    <property type="evidence" value="ECO:0007669"/>
    <property type="project" value="UniProtKB-UniRule"/>
</dbReference>
<dbReference type="CDD" id="cd01399">
    <property type="entry name" value="GlcN6P_deaminase"/>
    <property type="match status" value="1"/>
</dbReference>
<dbReference type="FunFam" id="3.40.50.1360:FF:000002">
    <property type="entry name" value="Glucosamine-6-phosphate deaminase"/>
    <property type="match status" value="1"/>
</dbReference>
<dbReference type="Gene3D" id="3.40.50.1360">
    <property type="match status" value="1"/>
</dbReference>
<dbReference type="HAMAP" id="MF_01241">
    <property type="entry name" value="GlcN6P_deamin"/>
    <property type="match status" value="1"/>
</dbReference>
<dbReference type="InterPro" id="IPR006148">
    <property type="entry name" value="Glc/Gal-6P_isomerase"/>
</dbReference>
<dbReference type="InterPro" id="IPR004547">
    <property type="entry name" value="Glucosamine6P_isomerase"/>
</dbReference>
<dbReference type="InterPro" id="IPR018321">
    <property type="entry name" value="Glucosamine6P_isomerase_CS"/>
</dbReference>
<dbReference type="InterPro" id="IPR037171">
    <property type="entry name" value="NagB/RpiA_transferase-like"/>
</dbReference>
<dbReference type="NCBIfam" id="TIGR00502">
    <property type="entry name" value="nagB"/>
    <property type="match status" value="1"/>
</dbReference>
<dbReference type="PANTHER" id="PTHR11280">
    <property type="entry name" value="GLUCOSAMINE-6-PHOSPHATE ISOMERASE"/>
    <property type="match status" value="1"/>
</dbReference>
<dbReference type="PANTHER" id="PTHR11280:SF5">
    <property type="entry name" value="GLUCOSAMINE-6-PHOSPHATE ISOMERASE"/>
    <property type="match status" value="1"/>
</dbReference>
<dbReference type="Pfam" id="PF01182">
    <property type="entry name" value="Glucosamine_iso"/>
    <property type="match status" value="1"/>
</dbReference>
<dbReference type="SUPFAM" id="SSF100950">
    <property type="entry name" value="NagB/RpiA/CoA transferase-like"/>
    <property type="match status" value="1"/>
</dbReference>
<dbReference type="PROSITE" id="PS01161">
    <property type="entry name" value="GLC_GALNAC_ISOMERASE"/>
    <property type="match status" value="1"/>
</dbReference>